<sequence length="308" mass="35196">MKVKVRSYFTISVEDRTKRLHNTLSAEYIYLIQGLLTQGQSYKAPYSGYTVAFTPPSNMYFVFLSNGVVVARFPAKLLSYNENINTVNASQCQNNLTSCNLNNLLFSLEYSSTDETNDTYTFDEVQLWADNEYMIAYASVGTTTKNVNTFVRVTWDAIVTIESDNVLYIPGCTDFSLMLNLQLQLNNYQPYLCLNLPYIIVALTLVPYSLVPQNTFLYTQLSTLLKILNISSTQQLQLQGVQYYVVGNTVYPISQPYIIINTQQPNTITLFLLYGINNNYFIYTTSLSVTIQYFKLYIPTLTINMVEQ</sequence>
<evidence type="ECO:0000255" key="1"/>
<evidence type="ECO:0000305" key="2"/>
<proteinExistence type="predicted"/>
<comment type="subcellular location">
    <subcellularLocation>
        <location evidence="2">Host membrane</location>
        <topology evidence="2">Single-pass membrane protein</topology>
    </subcellularLocation>
</comment>
<organismHost>
    <name type="scientific">Saccharolobus islandicus</name>
    <name type="common">Sulfolobus islandicus</name>
    <dbReference type="NCBI Taxonomy" id="43080"/>
</organismHost>
<keyword id="KW-1043">Host membrane</keyword>
<keyword id="KW-0472">Membrane</keyword>
<keyword id="KW-1185">Reference proteome</keyword>
<keyword id="KW-0812">Transmembrane</keyword>
<keyword id="KW-1133">Transmembrane helix</keyword>
<accession>Q914H7</accession>
<protein>
    <recommendedName>
        <fullName>Uncharacterized protein 55</fullName>
    </recommendedName>
</protein>
<reference key="1">
    <citation type="journal article" date="2000" name="Virology">
        <title>A novel lipothrixvirus, SIFV, of the extremely thermophilic crenarchaeon Sulfolobus.</title>
        <authorList>
            <person name="Arnold H.P."/>
            <person name="Zillig W."/>
            <person name="Ziese U."/>
            <person name="Holz I."/>
            <person name="Crosby M."/>
            <person name="Utterback T."/>
            <person name="Weidmann J.F."/>
            <person name="Umayam L.A."/>
            <person name="Teffera K."/>
            <person name="Kristjanson J.K."/>
            <person name="Klenk H.P."/>
            <person name="Nelson K.E."/>
            <person name="Fraser C.M."/>
        </authorList>
    </citation>
    <scope>NUCLEOTIDE SEQUENCE [GENOMIC DNA]</scope>
</reference>
<name>Y055_SIFVH</name>
<dbReference type="EMBL" id="AF440571">
    <property type="protein sequence ID" value="AAL27764.1"/>
    <property type="molecule type" value="Genomic_DNA"/>
</dbReference>
<dbReference type="RefSeq" id="NP_445718.1">
    <property type="nucleotide sequence ID" value="NC_003214.2"/>
</dbReference>
<dbReference type="GeneID" id="922297"/>
<dbReference type="KEGG" id="vg:922297"/>
<dbReference type="Proteomes" id="UP000007017">
    <property type="component" value="Segment"/>
</dbReference>
<dbReference type="GO" id="GO:0033644">
    <property type="term" value="C:host cell membrane"/>
    <property type="evidence" value="ECO:0007669"/>
    <property type="project" value="UniProtKB-SubCell"/>
</dbReference>
<dbReference type="GO" id="GO:0016020">
    <property type="term" value="C:membrane"/>
    <property type="evidence" value="ECO:0007669"/>
    <property type="project" value="UniProtKB-KW"/>
</dbReference>
<feature type="chain" id="PRO_0000385413" description="Uncharacterized protein 55">
    <location>
        <begin position="1"/>
        <end position="308"/>
    </location>
</feature>
<feature type="transmembrane region" description="Helical" evidence="1">
    <location>
        <begin position="191"/>
        <end position="211"/>
    </location>
</feature>
<organism>
    <name type="scientific">Sulfolobus islandicus filamentous virus (isolate Iceland/Hveragerdi)</name>
    <name type="common">SIFV</name>
    <dbReference type="NCBI Taxonomy" id="654908"/>
    <lineage>
        <taxon>Viruses</taxon>
        <taxon>Adnaviria</taxon>
        <taxon>Zilligvirae</taxon>
        <taxon>Taleaviricota</taxon>
        <taxon>Tokiviricetes</taxon>
        <taxon>Ligamenvirales</taxon>
        <taxon>Lipothrixviridae</taxon>
        <taxon>Betalipothrixvirus</taxon>
        <taxon>Sulfolobus islandicus filamentous virus</taxon>
    </lineage>
</organism>
<gene>
    <name type="primary">SIFV0055</name>
</gene>